<sequence length="729" mass="79594">MLYKGDTLYLDWLEDGIAELVFDAPGSVNKLDTATVASLGQALEVLEKQHDLKGLLLRSNKAAFIVGADITEFLSLFLVPEEQLSQWLHFANSVFNRLEDLPVPTLAAVNGYALGGGCECVLATDYRLATPDLRIGLPETKLGIMPGFGGSVRLPRMLGADSALEIIAAGKDVGAEHALKIGLVDGVVKQEKLIEGAIAVLRQAITGDLDWRAKRQPKLEPLKLSKIEAAMSFTIAKGMVAQTAGKHYPAPMTAVKTIEAAARFGREEALNLENKSFVPLAHTNEARALVGIFLNDQYVKGKAKKLTKDIETPKQAAVLGAGIMGGGIAYQSAWKGVPVIMKDINDKSLNLGMTEAAKLLNKQLERGKIDGLKLAGVISTIHPTLDYAGFDRVDVVVEAVVENPKVKKAVLAETEQKVRPETVLASNTSTIPIGELASALERPENFCGMHFFNPVHRMPLVEIIRGEKSSDETIAKVVAWASKMGKTPIVVNDCPGFFVNRVLFPYFAGFSQLLRDGADFRKVDKVMEKQFGWPMGPAYLLDVVGIDTAHHAQAVMAAGFPQRMQKDYRDAIDALFDASRFGQKNGLGFWRYKEDSKGKPKKEEDAAVDDLLASVSQPKRDFSDDEIIARMMIPMINEVVRCLEEGIIASPAEADMALVYGLGFPPFHGGAFRWLDTQGSAKYLDMAQQYQHLGPLYEVPEGLRNKARHNEPYYPPVEPARPVGSLKTA</sequence>
<feature type="chain" id="PRO_0000109287" description="Fatty acid oxidation complex subunit alpha">
    <location>
        <begin position="1"/>
        <end position="729"/>
    </location>
</feature>
<feature type="region of interest" description="Enoyl-CoA hydratase/isomerase" evidence="1">
    <location>
        <begin position="1"/>
        <end position="189"/>
    </location>
</feature>
<feature type="region of interest" description="3-hydroxyacyl-CoA dehydrogenase" evidence="1">
    <location>
        <begin position="311"/>
        <end position="729"/>
    </location>
</feature>
<feature type="region of interest" description="Disordered" evidence="2">
    <location>
        <begin position="708"/>
        <end position="729"/>
    </location>
</feature>
<feature type="active site" description="For 3-hydroxyacyl-CoA dehydrogenase activity" evidence="1">
    <location>
        <position position="450"/>
    </location>
</feature>
<feature type="binding site" evidence="1">
    <location>
        <position position="296"/>
    </location>
    <ligand>
        <name>substrate</name>
    </ligand>
</feature>
<feature type="binding site" evidence="1">
    <location>
        <position position="324"/>
    </location>
    <ligand>
        <name>NAD(+)</name>
        <dbReference type="ChEBI" id="CHEBI:57540"/>
    </ligand>
</feature>
<feature type="binding site" evidence="1">
    <location>
        <position position="343"/>
    </location>
    <ligand>
        <name>NAD(+)</name>
        <dbReference type="ChEBI" id="CHEBI:57540"/>
    </ligand>
</feature>
<feature type="binding site" evidence="1">
    <location>
        <begin position="400"/>
        <end position="402"/>
    </location>
    <ligand>
        <name>NAD(+)</name>
        <dbReference type="ChEBI" id="CHEBI:57540"/>
    </ligand>
</feature>
<feature type="binding site" evidence="1">
    <location>
        <position position="407"/>
    </location>
    <ligand>
        <name>NAD(+)</name>
        <dbReference type="ChEBI" id="CHEBI:57540"/>
    </ligand>
</feature>
<feature type="binding site" evidence="1">
    <location>
        <position position="429"/>
    </location>
    <ligand>
        <name>NAD(+)</name>
        <dbReference type="ChEBI" id="CHEBI:57540"/>
    </ligand>
</feature>
<feature type="binding site" evidence="1">
    <location>
        <position position="453"/>
    </location>
    <ligand>
        <name>NAD(+)</name>
        <dbReference type="ChEBI" id="CHEBI:57540"/>
    </ligand>
</feature>
<feature type="binding site" evidence="1">
    <location>
        <position position="500"/>
    </location>
    <ligand>
        <name>substrate</name>
    </ligand>
</feature>
<feature type="binding site" evidence="1">
    <location>
        <position position="660"/>
    </location>
    <ligand>
        <name>substrate</name>
    </ligand>
</feature>
<feature type="site" description="Important for catalytic activity" evidence="1">
    <location>
        <position position="119"/>
    </location>
</feature>
<feature type="site" description="Important for catalytic activity" evidence="1">
    <location>
        <position position="139"/>
    </location>
</feature>
<dbReference type="EC" id="4.2.1.17" evidence="1"/>
<dbReference type="EC" id="5.1.2.3" evidence="1"/>
<dbReference type="EC" id="5.3.3.8" evidence="1"/>
<dbReference type="EC" id="1.1.1.35" evidence="1"/>
<dbReference type="EMBL" id="AF233324">
    <property type="protein sequence ID" value="AAF33409.1"/>
    <property type="molecule type" value="Genomic_DNA"/>
</dbReference>
<dbReference type="EMBL" id="AE006468">
    <property type="protein sequence ID" value="AAL22827.1"/>
    <property type="molecule type" value="Genomic_DNA"/>
</dbReference>
<dbReference type="RefSeq" id="NP_462868.1">
    <property type="nucleotide sequence ID" value="NC_003197.2"/>
</dbReference>
<dbReference type="RefSeq" id="WP_000965998.1">
    <property type="nucleotide sequence ID" value="NC_003197.2"/>
</dbReference>
<dbReference type="SMR" id="Q9L6L5"/>
<dbReference type="STRING" id="99287.STM3983"/>
<dbReference type="PaxDb" id="99287-STM3983"/>
<dbReference type="GeneID" id="1255509"/>
<dbReference type="KEGG" id="stm:STM3983"/>
<dbReference type="PATRIC" id="fig|99287.12.peg.4202"/>
<dbReference type="HOGENOM" id="CLU_009834_16_3_6"/>
<dbReference type="PhylomeDB" id="Q9L6L5"/>
<dbReference type="BioCyc" id="SENT99287:STM3983-MONOMER"/>
<dbReference type="UniPathway" id="UPA00659"/>
<dbReference type="Proteomes" id="UP000001014">
    <property type="component" value="Chromosome"/>
</dbReference>
<dbReference type="GO" id="GO:0036125">
    <property type="term" value="C:fatty acid beta-oxidation multienzyme complex"/>
    <property type="evidence" value="ECO:0007669"/>
    <property type="project" value="InterPro"/>
</dbReference>
<dbReference type="GO" id="GO:0008692">
    <property type="term" value="F:3-hydroxybutyryl-CoA epimerase activity"/>
    <property type="evidence" value="ECO:0007669"/>
    <property type="project" value="UniProtKB-UniRule"/>
</dbReference>
<dbReference type="GO" id="GO:0004165">
    <property type="term" value="F:delta(3)-delta(2)-enoyl-CoA isomerase activity"/>
    <property type="evidence" value="ECO:0007669"/>
    <property type="project" value="UniProtKB-UniRule"/>
</dbReference>
<dbReference type="GO" id="GO:0004300">
    <property type="term" value="F:enoyl-CoA hydratase activity"/>
    <property type="evidence" value="ECO:0000318"/>
    <property type="project" value="GO_Central"/>
</dbReference>
<dbReference type="GO" id="GO:0016509">
    <property type="term" value="F:long-chain-3-hydroxyacyl-CoA dehydrogenase activity"/>
    <property type="evidence" value="ECO:0000318"/>
    <property type="project" value="GO_Central"/>
</dbReference>
<dbReference type="GO" id="GO:0070403">
    <property type="term" value="F:NAD+ binding"/>
    <property type="evidence" value="ECO:0007669"/>
    <property type="project" value="InterPro"/>
</dbReference>
<dbReference type="GO" id="GO:0006635">
    <property type="term" value="P:fatty acid beta-oxidation"/>
    <property type="evidence" value="ECO:0000318"/>
    <property type="project" value="GO_Central"/>
</dbReference>
<dbReference type="CDD" id="cd06558">
    <property type="entry name" value="crotonase-like"/>
    <property type="match status" value="1"/>
</dbReference>
<dbReference type="FunFam" id="1.10.1040.50:FF:000001">
    <property type="entry name" value="Fatty acid oxidation complex subunit alpha"/>
    <property type="match status" value="1"/>
</dbReference>
<dbReference type="FunFam" id="3.90.226.10:FF:000018">
    <property type="entry name" value="Fatty acid oxidation complex subunit alpha"/>
    <property type="match status" value="1"/>
</dbReference>
<dbReference type="FunFam" id="3.40.50.720:FF:000009">
    <property type="entry name" value="Fatty oxidation complex, alpha subunit"/>
    <property type="match status" value="1"/>
</dbReference>
<dbReference type="Gene3D" id="1.10.1040.50">
    <property type="match status" value="1"/>
</dbReference>
<dbReference type="Gene3D" id="3.90.226.10">
    <property type="entry name" value="2-enoyl-CoA Hydratase, Chain A, domain 1"/>
    <property type="match status" value="1"/>
</dbReference>
<dbReference type="Gene3D" id="3.40.50.720">
    <property type="entry name" value="NAD(P)-binding Rossmann-like Domain"/>
    <property type="match status" value="1"/>
</dbReference>
<dbReference type="HAMAP" id="MF_01621">
    <property type="entry name" value="FadB"/>
    <property type="match status" value="1"/>
</dbReference>
<dbReference type="InterPro" id="IPR006180">
    <property type="entry name" value="3-OHacyl-CoA_DH_CS"/>
</dbReference>
<dbReference type="InterPro" id="IPR006176">
    <property type="entry name" value="3-OHacyl-CoA_DH_NAD-bd"/>
</dbReference>
<dbReference type="InterPro" id="IPR006108">
    <property type="entry name" value="3HC_DH_C"/>
</dbReference>
<dbReference type="InterPro" id="IPR008927">
    <property type="entry name" value="6-PGluconate_DH-like_C_sf"/>
</dbReference>
<dbReference type="InterPro" id="IPR029045">
    <property type="entry name" value="ClpP/crotonase-like_dom_sf"/>
</dbReference>
<dbReference type="InterPro" id="IPR018376">
    <property type="entry name" value="Enoyl-CoA_hyd/isom_CS"/>
</dbReference>
<dbReference type="InterPro" id="IPR001753">
    <property type="entry name" value="Enoyl-CoA_hydra/iso"/>
</dbReference>
<dbReference type="InterPro" id="IPR050136">
    <property type="entry name" value="FA_oxidation_alpha_subunit"/>
</dbReference>
<dbReference type="InterPro" id="IPR012799">
    <property type="entry name" value="FadB"/>
</dbReference>
<dbReference type="InterPro" id="IPR036291">
    <property type="entry name" value="NAD(P)-bd_dom_sf"/>
</dbReference>
<dbReference type="NCBIfam" id="TIGR02437">
    <property type="entry name" value="FadB"/>
    <property type="match status" value="1"/>
</dbReference>
<dbReference type="NCBIfam" id="NF008727">
    <property type="entry name" value="PRK11730.1"/>
    <property type="match status" value="1"/>
</dbReference>
<dbReference type="PANTHER" id="PTHR43612">
    <property type="entry name" value="TRIFUNCTIONAL ENZYME SUBUNIT ALPHA"/>
    <property type="match status" value="1"/>
</dbReference>
<dbReference type="PANTHER" id="PTHR43612:SF3">
    <property type="entry name" value="TRIFUNCTIONAL ENZYME SUBUNIT ALPHA, MITOCHONDRIAL"/>
    <property type="match status" value="1"/>
</dbReference>
<dbReference type="Pfam" id="PF00725">
    <property type="entry name" value="3HCDH"/>
    <property type="match status" value="2"/>
</dbReference>
<dbReference type="Pfam" id="PF02737">
    <property type="entry name" value="3HCDH_N"/>
    <property type="match status" value="1"/>
</dbReference>
<dbReference type="Pfam" id="PF00378">
    <property type="entry name" value="ECH_1"/>
    <property type="match status" value="1"/>
</dbReference>
<dbReference type="SUPFAM" id="SSF48179">
    <property type="entry name" value="6-phosphogluconate dehydrogenase C-terminal domain-like"/>
    <property type="match status" value="2"/>
</dbReference>
<dbReference type="SUPFAM" id="SSF52096">
    <property type="entry name" value="ClpP/crotonase"/>
    <property type="match status" value="1"/>
</dbReference>
<dbReference type="SUPFAM" id="SSF51735">
    <property type="entry name" value="NAD(P)-binding Rossmann-fold domains"/>
    <property type="match status" value="1"/>
</dbReference>
<dbReference type="PROSITE" id="PS00067">
    <property type="entry name" value="3HCDH"/>
    <property type="match status" value="1"/>
</dbReference>
<dbReference type="PROSITE" id="PS00166">
    <property type="entry name" value="ENOYL_COA_HYDRATASE"/>
    <property type="match status" value="1"/>
</dbReference>
<comment type="function">
    <text evidence="1">Involved in the aerobic and anaerobic degradation of long-chain fatty acids via beta-oxidation cycle. Catalyzes the formation of 3-oxoacyl-CoA from enoyl-CoA via L-3-hydroxyacyl-CoA. It can also use D-3-hydroxyacyl-CoA and cis-3-enoyl-CoA as substrate.</text>
</comment>
<comment type="catalytic activity">
    <reaction evidence="1">
        <text>a (3S)-3-hydroxyacyl-CoA + NAD(+) = a 3-oxoacyl-CoA + NADH + H(+)</text>
        <dbReference type="Rhea" id="RHEA:22432"/>
        <dbReference type="ChEBI" id="CHEBI:15378"/>
        <dbReference type="ChEBI" id="CHEBI:57318"/>
        <dbReference type="ChEBI" id="CHEBI:57540"/>
        <dbReference type="ChEBI" id="CHEBI:57945"/>
        <dbReference type="ChEBI" id="CHEBI:90726"/>
        <dbReference type="EC" id="1.1.1.35"/>
    </reaction>
</comment>
<comment type="catalytic activity">
    <reaction evidence="1">
        <text>a (3S)-3-hydroxyacyl-CoA = a (2E)-enoyl-CoA + H2O</text>
        <dbReference type="Rhea" id="RHEA:16105"/>
        <dbReference type="ChEBI" id="CHEBI:15377"/>
        <dbReference type="ChEBI" id="CHEBI:57318"/>
        <dbReference type="ChEBI" id="CHEBI:58856"/>
        <dbReference type="EC" id="4.2.1.17"/>
    </reaction>
</comment>
<comment type="catalytic activity">
    <reaction evidence="1">
        <text>a 4-saturated-(3S)-3-hydroxyacyl-CoA = a (3E)-enoyl-CoA + H2O</text>
        <dbReference type="Rhea" id="RHEA:20724"/>
        <dbReference type="ChEBI" id="CHEBI:15377"/>
        <dbReference type="ChEBI" id="CHEBI:58521"/>
        <dbReference type="ChEBI" id="CHEBI:137480"/>
        <dbReference type="EC" id="4.2.1.17"/>
    </reaction>
</comment>
<comment type="catalytic activity">
    <reaction evidence="1">
        <text>(3S)-3-hydroxybutanoyl-CoA = (3R)-3-hydroxybutanoyl-CoA</text>
        <dbReference type="Rhea" id="RHEA:21760"/>
        <dbReference type="ChEBI" id="CHEBI:57315"/>
        <dbReference type="ChEBI" id="CHEBI:57316"/>
        <dbReference type="EC" id="5.1.2.3"/>
    </reaction>
</comment>
<comment type="catalytic activity">
    <reaction evidence="1">
        <text>a (3Z)-enoyl-CoA = a 4-saturated (2E)-enoyl-CoA</text>
        <dbReference type="Rhea" id="RHEA:45900"/>
        <dbReference type="ChEBI" id="CHEBI:85097"/>
        <dbReference type="ChEBI" id="CHEBI:85489"/>
        <dbReference type="EC" id="5.3.3.8"/>
    </reaction>
</comment>
<comment type="catalytic activity">
    <reaction evidence="1">
        <text>a (3E)-enoyl-CoA = a 4-saturated (2E)-enoyl-CoA</text>
        <dbReference type="Rhea" id="RHEA:45228"/>
        <dbReference type="ChEBI" id="CHEBI:58521"/>
        <dbReference type="ChEBI" id="CHEBI:85097"/>
        <dbReference type="EC" id="5.3.3.8"/>
    </reaction>
</comment>
<comment type="pathway">
    <text evidence="1">Lipid metabolism; fatty acid beta-oxidation.</text>
</comment>
<comment type="subunit">
    <text evidence="1">Heterotetramer of two alpha chains (FadB) and two beta chains (FadA).</text>
</comment>
<comment type="similarity">
    <text evidence="1">In the N-terminal section; belongs to the enoyl-CoA hydratase/isomerase family.</text>
</comment>
<comment type="similarity">
    <text evidence="1">In the C-terminal section; belongs to the 3-hydroxyacyl-CoA dehydrogenase family.</text>
</comment>
<organism>
    <name type="scientific">Salmonella typhimurium (strain LT2 / SGSC1412 / ATCC 700720)</name>
    <dbReference type="NCBI Taxonomy" id="99287"/>
    <lineage>
        <taxon>Bacteria</taxon>
        <taxon>Pseudomonadati</taxon>
        <taxon>Pseudomonadota</taxon>
        <taxon>Gammaproteobacteria</taxon>
        <taxon>Enterobacterales</taxon>
        <taxon>Enterobacteriaceae</taxon>
        <taxon>Salmonella</taxon>
    </lineage>
</organism>
<name>FADB_SALTY</name>
<gene>
    <name evidence="1" type="primary">fadB</name>
    <name type="ordered locus">STM3983</name>
    <name type="ORF">STMD1.6</name>
</gene>
<keyword id="KW-0276">Fatty acid metabolism</keyword>
<keyword id="KW-0413">Isomerase</keyword>
<keyword id="KW-0442">Lipid degradation</keyword>
<keyword id="KW-0443">Lipid metabolism</keyword>
<keyword id="KW-0456">Lyase</keyword>
<keyword id="KW-0511">Multifunctional enzyme</keyword>
<keyword id="KW-0520">NAD</keyword>
<keyword id="KW-0560">Oxidoreductase</keyword>
<keyword id="KW-1185">Reference proteome</keyword>
<protein>
    <recommendedName>
        <fullName evidence="1">Fatty acid oxidation complex subunit alpha</fullName>
    </recommendedName>
    <domain>
        <recommendedName>
            <fullName evidence="1">Enoyl-CoA hydratase/Delta(3)-cis-Delta(2)-trans-enoyl-CoA isomerase/3-hydroxybutyryl-CoA epimerase</fullName>
            <ecNumber evidence="1">4.2.1.17</ecNumber>
            <ecNumber evidence="1">5.1.2.3</ecNumber>
            <ecNumber evidence="1">5.3.3.8</ecNumber>
        </recommendedName>
    </domain>
    <domain>
        <recommendedName>
            <fullName evidence="1">3-hydroxyacyl-CoA dehydrogenase</fullName>
            <ecNumber evidence="1">1.1.1.35</ecNumber>
        </recommendedName>
    </domain>
</protein>
<accession>Q9L6L5</accession>
<proteinExistence type="inferred from homology"/>
<reference key="1">
    <citation type="journal article" date="2001" name="Nature">
        <title>Complete genome sequence of Salmonella enterica serovar Typhimurium LT2.</title>
        <authorList>
            <person name="McClelland M."/>
            <person name="Sanderson K.E."/>
            <person name="Spieth J."/>
            <person name="Clifton S.W."/>
            <person name="Latreille P."/>
            <person name="Courtney L."/>
            <person name="Porwollik S."/>
            <person name="Ali J."/>
            <person name="Dante M."/>
            <person name="Du F."/>
            <person name="Hou S."/>
            <person name="Layman D."/>
            <person name="Leonard S."/>
            <person name="Nguyen C."/>
            <person name="Scott K."/>
            <person name="Holmes A."/>
            <person name="Grewal N."/>
            <person name="Mulvaney E."/>
            <person name="Ryan E."/>
            <person name="Sun H."/>
            <person name="Florea L."/>
            <person name="Miller W."/>
            <person name="Stoneking T."/>
            <person name="Nhan M."/>
            <person name="Waterston R."/>
            <person name="Wilson R.K."/>
        </authorList>
    </citation>
    <scope>NUCLEOTIDE SEQUENCE [LARGE SCALE GENOMIC DNA]</scope>
    <source>
        <strain>LT2 / SGSC1412 / ATCC 700720</strain>
    </source>
</reference>
<evidence type="ECO:0000255" key="1">
    <source>
        <dbReference type="HAMAP-Rule" id="MF_01621"/>
    </source>
</evidence>
<evidence type="ECO:0000256" key="2">
    <source>
        <dbReference type="SAM" id="MobiDB-lite"/>
    </source>
</evidence>